<gene>
    <name evidence="1" type="primary">sucC</name>
    <name type="ordered locus">ABAYE0783</name>
</gene>
<feature type="chain" id="PRO_1000129150" description="Succinate--CoA ligase [ADP-forming] subunit beta">
    <location>
        <begin position="1"/>
        <end position="388"/>
    </location>
</feature>
<feature type="domain" description="ATP-grasp" evidence="1">
    <location>
        <begin position="9"/>
        <end position="245"/>
    </location>
</feature>
<feature type="binding site" evidence="1">
    <location>
        <position position="46"/>
    </location>
    <ligand>
        <name>ATP</name>
        <dbReference type="ChEBI" id="CHEBI:30616"/>
    </ligand>
</feature>
<feature type="binding site" evidence="1">
    <location>
        <begin position="53"/>
        <end position="55"/>
    </location>
    <ligand>
        <name>ATP</name>
        <dbReference type="ChEBI" id="CHEBI:30616"/>
    </ligand>
</feature>
<feature type="binding site" evidence="1">
    <location>
        <position position="100"/>
    </location>
    <ligand>
        <name>ATP</name>
        <dbReference type="ChEBI" id="CHEBI:30616"/>
    </ligand>
</feature>
<feature type="binding site" evidence="1">
    <location>
        <position position="103"/>
    </location>
    <ligand>
        <name>ATP</name>
        <dbReference type="ChEBI" id="CHEBI:30616"/>
    </ligand>
</feature>
<feature type="binding site" evidence="1">
    <location>
        <position position="108"/>
    </location>
    <ligand>
        <name>ATP</name>
        <dbReference type="ChEBI" id="CHEBI:30616"/>
    </ligand>
</feature>
<feature type="binding site" evidence="1">
    <location>
        <position position="200"/>
    </location>
    <ligand>
        <name>Mg(2+)</name>
        <dbReference type="ChEBI" id="CHEBI:18420"/>
    </ligand>
</feature>
<feature type="binding site" evidence="1">
    <location>
        <position position="214"/>
    </location>
    <ligand>
        <name>Mg(2+)</name>
        <dbReference type="ChEBI" id="CHEBI:18420"/>
    </ligand>
</feature>
<feature type="binding site" evidence="1">
    <location>
        <position position="265"/>
    </location>
    <ligand>
        <name>substrate</name>
        <note>ligand shared with subunit alpha</note>
    </ligand>
</feature>
<feature type="binding site" evidence="1">
    <location>
        <begin position="322"/>
        <end position="324"/>
    </location>
    <ligand>
        <name>substrate</name>
        <note>ligand shared with subunit alpha</note>
    </ligand>
</feature>
<keyword id="KW-0067">ATP-binding</keyword>
<keyword id="KW-0436">Ligase</keyword>
<keyword id="KW-0460">Magnesium</keyword>
<keyword id="KW-0479">Metal-binding</keyword>
<keyword id="KW-0547">Nucleotide-binding</keyword>
<keyword id="KW-0816">Tricarboxylic acid cycle</keyword>
<protein>
    <recommendedName>
        <fullName evidence="1">Succinate--CoA ligase [ADP-forming] subunit beta</fullName>
        <ecNumber evidence="1">6.2.1.5</ecNumber>
    </recommendedName>
    <alternativeName>
        <fullName evidence="1">Succinyl-CoA synthetase subunit beta</fullName>
        <shortName evidence="1">SCS-beta</shortName>
    </alternativeName>
</protein>
<dbReference type="EC" id="6.2.1.5" evidence="1"/>
<dbReference type="EMBL" id="CU459141">
    <property type="protein sequence ID" value="CAM85739.1"/>
    <property type="molecule type" value="Genomic_DNA"/>
</dbReference>
<dbReference type="RefSeq" id="WP_001048573.1">
    <property type="nucleotide sequence ID" value="NZ_JBDGFB010000002.1"/>
</dbReference>
<dbReference type="SMR" id="B0VEF2"/>
<dbReference type="EnsemblBacteria" id="CAM85739">
    <property type="protein sequence ID" value="CAM85739"/>
    <property type="gene ID" value="ABAYE0783"/>
</dbReference>
<dbReference type="GeneID" id="92894978"/>
<dbReference type="KEGG" id="aby:ABAYE0783"/>
<dbReference type="HOGENOM" id="CLU_037430_0_2_6"/>
<dbReference type="UniPathway" id="UPA00223">
    <property type="reaction ID" value="UER00999"/>
</dbReference>
<dbReference type="GO" id="GO:0005829">
    <property type="term" value="C:cytosol"/>
    <property type="evidence" value="ECO:0007669"/>
    <property type="project" value="TreeGrafter"/>
</dbReference>
<dbReference type="GO" id="GO:0042709">
    <property type="term" value="C:succinate-CoA ligase complex"/>
    <property type="evidence" value="ECO:0007669"/>
    <property type="project" value="TreeGrafter"/>
</dbReference>
<dbReference type="GO" id="GO:0005524">
    <property type="term" value="F:ATP binding"/>
    <property type="evidence" value="ECO:0007669"/>
    <property type="project" value="UniProtKB-UniRule"/>
</dbReference>
<dbReference type="GO" id="GO:0000287">
    <property type="term" value="F:magnesium ion binding"/>
    <property type="evidence" value="ECO:0007669"/>
    <property type="project" value="UniProtKB-UniRule"/>
</dbReference>
<dbReference type="GO" id="GO:0004775">
    <property type="term" value="F:succinate-CoA ligase (ADP-forming) activity"/>
    <property type="evidence" value="ECO:0007669"/>
    <property type="project" value="UniProtKB-UniRule"/>
</dbReference>
<dbReference type="GO" id="GO:0004776">
    <property type="term" value="F:succinate-CoA ligase (GDP-forming) activity"/>
    <property type="evidence" value="ECO:0007669"/>
    <property type="project" value="RHEA"/>
</dbReference>
<dbReference type="GO" id="GO:0006104">
    <property type="term" value="P:succinyl-CoA metabolic process"/>
    <property type="evidence" value="ECO:0007669"/>
    <property type="project" value="TreeGrafter"/>
</dbReference>
<dbReference type="GO" id="GO:0006099">
    <property type="term" value="P:tricarboxylic acid cycle"/>
    <property type="evidence" value="ECO:0007669"/>
    <property type="project" value="UniProtKB-UniRule"/>
</dbReference>
<dbReference type="FunFam" id="3.30.1490.20:FF:000002">
    <property type="entry name" value="Succinate--CoA ligase [ADP-forming] subunit beta"/>
    <property type="match status" value="1"/>
</dbReference>
<dbReference type="FunFam" id="3.30.470.20:FF:000002">
    <property type="entry name" value="Succinate--CoA ligase [ADP-forming] subunit beta"/>
    <property type="match status" value="1"/>
</dbReference>
<dbReference type="FunFam" id="3.40.50.261:FF:000001">
    <property type="entry name" value="Succinate--CoA ligase [ADP-forming] subunit beta"/>
    <property type="match status" value="1"/>
</dbReference>
<dbReference type="Gene3D" id="3.30.1490.20">
    <property type="entry name" value="ATP-grasp fold, A domain"/>
    <property type="match status" value="1"/>
</dbReference>
<dbReference type="Gene3D" id="3.30.470.20">
    <property type="entry name" value="ATP-grasp fold, B domain"/>
    <property type="match status" value="1"/>
</dbReference>
<dbReference type="Gene3D" id="3.40.50.261">
    <property type="entry name" value="Succinyl-CoA synthetase domains"/>
    <property type="match status" value="1"/>
</dbReference>
<dbReference type="HAMAP" id="MF_00558">
    <property type="entry name" value="Succ_CoA_beta"/>
    <property type="match status" value="1"/>
</dbReference>
<dbReference type="InterPro" id="IPR011761">
    <property type="entry name" value="ATP-grasp"/>
</dbReference>
<dbReference type="InterPro" id="IPR013650">
    <property type="entry name" value="ATP-grasp_succ-CoA_synth-type"/>
</dbReference>
<dbReference type="InterPro" id="IPR013815">
    <property type="entry name" value="ATP_grasp_subdomain_1"/>
</dbReference>
<dbReference type="InterPro" id="IPR017866">
    <property type="entry name" value="Succ-CoA_synthase_bsu_CS"/>
</dbReference>
<dbReference type="InterPro" id="IPR005811">
    <property type="entry name" value="SUCC_ACL_C"/>
</dbReference>
<dbReference type="InterPro" id="IPR005809">
    <property type="entry name" value="Succ_CoA_ligase-like_bsu"/>
</dbReference>
<dbReference type="InterPro" id="IPR016102">
    <property type="entry name" value="Succinyl-CoA_synth-like"/>
</dbReference>
<dbReference type="NCBIfam" id="NF001913">
    <property type="entry name" value="PRK00696.1"/>
    <property type="match status" value="1"/>
</dbReference>
<dbReference type="NCBIfam" id="TIGR01016">
    <property type="entry name" value="sucCoAbeta"/>
    <property type="match status" value="1"/>
</dbReference>
<dbReference type="PANTHER" id="PTHR11815:SF10">
    <property type="entry name" value="SUCCINATE--COA LIGASE [GDP-FORMING] SUBUNIT BETA, MITOCHONDRIAL"/>
    <property type="match status" value="1"/>
</dbReference>
<dbReference type="PANTHER" id="PTHR11815">
    <property type="entry name" value="SUCCINYL-COA SYNTHETASE BETA CHAIN"/>
    <property type="match status" value="1"/>
</dbReference>
<dbReference type="Pfam" id="PF08442">
    <property type="entry name" value="ATP-grasp_2"/>
    <property type="match status" value="1"/>
</dbReference>
<dbReference type="Pfam" id="PF00549">
    <property type="entry name" value="Ligase_CoA"/>
    <property type="match status" value="1"/>
</dbReference>
<dbReference type="PIRSF" id="PIRSF001554">
    <property type="entry name" value="SucCS_beta"/>
    <property type="match status" value="1"/>
</dbReference>
<dbReference type="SUPFAM" id="SSF56059">
    <property type="entry name" value="Glutathione synthetase ATP-binding domain-like"/>
    <property type="match status" value="1"/>
</dbReference>
<dbReference type="SUPFAM" id="SSF52210">
    <property type="entry name" value="Succinyl-CoA synthetase domains"/>
    <property type="match status" value="1"/>
</dbReference>
<dbReference type="PROSITE" id="PS50975">
    <property type="entry name" value="ATP_GRASP"/>
    <property type="match status" value="1"/>
</dbReference>
<dbReference type="PROSITE" id="PS01217">
    <property type="entry name" value="SUCCINYL_COA_LIG_3"/>
    <property type="match status" value="1"/>
</dbReference>
<organism>
    <name type="scientific">Acinetobacter baumannii (strain AYE)</name>
    <dbReference type="NCBI Taxonomy" id="509173"/>
    <lineage>
        <taxon>Bacteria</taxon>
        <taxon>Pseudomonadati</taxon>
        <taxon>Pseudomonadota</taxon>
        <taxon>Gammaproteobacteria</taxon>
        <taxon>Moraxellales</taxon>
        <taxon>Moraxellaceae</taxon>
        <taxon>Acinetobacter</taxon>
        <taxon>Acinetobacter calcoaceticus/baumannii complex</taxon>
    </lineage>
</organism>
<evidence type="ECO:0000255" key="1">
    <source>
        <dbReference type="HAMAP-Rule" id="MF_00558"/>
    </source>
</evidence>
<name>SUCC_ACIBY</name>
<proteinExistence type="inferred from homology"/>
<sequence length="388" mass="41530">MNLHEYQAKALLKEYGMPVQEGILATNADEAVAAFEQLGGKFAVMKAQVHAGGRGKAGGVKVAKSKEDVIEFANNIIGTRLVTYQTDANGQPVNSIIVAEDVYPVERELYLGAVVDRSSRRITFMASTEGGVEIEKVAEETPEKIIKVEVDPLVGLQPFQAREVAFALGLKDKQIGQFVKIMTAAYQAFVENDFALFEINPLSVRENGEILCVDAKVGIDSNALYRLPKVAALRDKSQENERELKASEFDLNYVALEGNIGCMVNGAGLAMATMDIIKLYGGQPANFLDVGGGATKERVIEAFKIILADTSVQGVLINIFGGIVRCDMIAEAIIAAVQEVNVTVPVVVRLEGNNAELGAKLLDESGLKLISANGLSDAAEKVVAAVKA</sequence>
<accession>B0VEF2</accession>
<comment type="function">
    <text evidence="1">Succinyl-CoA synthetase functions in the citric acid cycle (TCA), coupling the hydrolysis of succinyl-CoA to the synthesis of either ATP or GTP and thus represents the only step of substrate-level phosphorylation in the TCA. The beta subunit provides nucleotide specificity of the enzyme and binds the substrate succinate, while the binding sites for coenzyme A and phosphate are found in the alpha subunit.</text>
</comment>
<comment type="catalytic activity">
    <reaction evidence="1">
        <text>succinate + ATP + CoA = succinyl-CoA + ADP + phosphate</text>
        <dbReference type="Rhea" id="RHEA:17661"/>
        <dbReference type="ChEBI" id="CHEBI:30031"/>
        <dbReference type="ChEBI" id="CHEBI:30616"/>
        <dbReference type="ChEBI" id="CHEBI:43474"/>
        <dbReference type="ChEBI" id="CHEBI:57287"/>
        <dbReference type="ChEBI" id="CHEBI:57292"/>
        <dbReference type="ChEBI" id="CHEBI:456216"/>
        <dbReference type="EC" id="6.2.1.5"/>
    </reaction>
    <physiologicalReaction direction="right-to-left" evidence="1">
        <dbReference type="Rhea" id="RHEA:17663"/>
    </physiologicalReaction>
</comment>
<comment type="catalytic activity">
    <reaction evidence="1">
        <text>GTP + succinate + CoA = succinyl-CoA + GDP + phosphate</text>
        <dbReference type="Rhea" id="RHEA:22120"/>
        <dbReference type="ChEBI" id="CHEBI:30031"/>
        <dbReference type="ChEBI" id="CHEBI:37565"/>
        <dbReference type="ChEBI" id="CHEBI:43474"/>
        <dbReference type="ChEBI" id="CHEBI:57287"/>
        <dbReference type="ChEBI" id="CHEBI:57292"/>
        <dbReference type="ChEBI" id="CHEBI:58189"/>
    </reaction>
    <physiologicalReaction direction="right-to-left" evidence="1">
        <dbReference type="Rhea" id="RHEA:22122"/>
    </physiologicalReaction>
</comment>
<comment type="cofactor">
    <cofactor evidence="1">
        <name>Mg(2+)</name>
        <dbReference type="ChEBI" id="CHEBI:18420"/>
    </cofactor>
    <text evidence="1">Binds 1 Mg(2+) ion per subunit.</text>
</comment>
<comment type="pathway">
    <text evidence="1">Carbohydrate metabolism; tricarboxylic acid cycle; succinate from succinyl-CoA (ligase route): step 1/1.</text>
</comment>
<comment type="subunit">
    <text evidence="1">Heterotetramer of two alpha and two beta subunits.</text>
</comment>
<comment type="similarity">
    <text evidence="1">Belongs to the succinate/malate CoA ligase beta subunit family.</text>
</comment>
<reference key="1">
    <citation type="journal article" date="2008" name="PLoS ONE">
        <title>Comparative analysis of Acinetobacters: three genomes for three lifestyles.</title>
        <authorList>
            <person name="Vallenet D."/>
            <person name="Nordmann P."/>
            <person name="Barbe V."/>
            <person name="Poirel L."/>
            <person name="Mangenot S."/>
            <person name="Bataille E."/>
            <person name="Dossat C."/>
            <person name="Gas S."/>
            <person name="Kreimeyer A."/>
            <person name="Lenoble P."/>
            <person name="Oztas S."/>
            <person name="Poulain J."/>
            <person name="Segurens B."/>
            <person name="Robert C."/>
            <person name="Abergel C."/>
            <person name="Claverie J.-M."/>
            <person name="Raoult D."/>
            <person name="Medigue C."/>
            <person name="Weissenbach J."/>
            <person name="Cruveiller S."/>
        </authorList>
    </citation>
    <scope>NUCLEOTIDE SEQUENCE [LARGE SCALE GENOMIC DNA]</scope>
    <source>
        <strain>AYE</strain>
    </source>
</reference>